<name>Y194_EHRCR</name>
<feature type="chain" id="PRO_0000291086" description="UPF0434 protein ECH_0194">
    <location>
        <begin position="1"/>
        <end position="56"/>
    </location>
</feature>
<gene>
    <name type="ordered locus">ECH_0194</name>
</gene>
<sequence>MFDHRILEILVCPLTKDKLQYNKDTNELISEKAKLAFPIRDGIPIMLIDEARKLEE</sequence>
<dbReference type="EMBL" id="CP000236">
    <property type="protein sequence ID" value="ABD44914.1"/>
    <property type="status" value="ALT_INIT"/>
    <property type="molecule type" value="Genomic_DNA"/>
</dbReference>
<dbReference type="RefSeq" id="WP_006010460.1">
    <property type="nucleotide sequence ID" value="NC_007799.1"/>
</dbReference>
<dbReference type="SMR" id="Q2GHR5"/>
<dbReference type="STRING" id="205920.ECH_0194"/>
<dbReference type="KEGG" id="ech:ECH_0194"/>
<dbReference type="eggNOG" id="COG2835">
    <property type="taxonomic scope" value="Bacteria"/>
</dbReference>
<dbReference type="HOGENOM" id="CLU_155659_3_1_5"/>
<dbReference type="OrthoDB" id="9812205at2"/>
<dbReference type="Proteomes" id="UP000008320">
    <property type="component" value="Chromosome"/>
</dbReference>
<dbReference type="GO" id="GO:0005829">
    <property type="term" value="C:cytosol"/>
    <property type="evidence" value="ECO:0007669"/>
    <property type="project" value="TreeGrafter"/>
</dbReference>
<dbReference type="FunFam" id="2.20.25.10:FF:000002">
    <property type="entry name" value="UPF0434 protein YcaR"/>
    <property type="match status" value="1"/>
</dbReference>
<dbReference type="Gene3D" id="2.20.25.10">
    <property type="match status" value="1"/>
</dbReference>
<dbReference type="HAMAP" id="MF_01187">
    <property type="entry name" value="UPF0434"/>
    <property type="match status" value="1"/>
</dbReference>
<dbReference type="InterPro" id="IPR005651">
    <property type="entry name" value="Trm112-like"/>
</dbReference>
<dbReference type="PANTHER" id="PTHR33505:SF4">
    <property type="entry name" value="PROTEIN PREY, MITOCHONDRIAL"/>
    <property type="match status" value="1"/>
</dbReference>
<dbReference type="PANTHER" id="PTHR33505">
    <property type="entry name" value="ZGC:162634"/>
    <property type="match status" value="1"/>
</dbReference>
<dbReference type="Pfam" id="PF03966">
    <property type="entry name" value="Trm112p"/>
    <property type="match status" value="1"/>
</dbReference>
<dbReference type="SUPFAM" id="SSF158997">
    <property type="entry name" value="Trm112p-like"/>
    <property type="match status" value="1"/>
</dbReference>
<proteinExistence type="inferred from homology"/>
<organism>
    <name type="scientific">Ehrlichia chaffeensis (strain ATCC CRL-10679 / Arkansas)</name>
    <dbReference type="NCBI Taxonomy" id="205920"/>
    <lineage>
        <taxon>Bacteria</taxon>
        <taxon>Pseudomonadati</taxon>
        <taxon>Pseudomonadota</taxon>
        <taxon>Alphaproteobacteria</taxon>
        <taxon>Rickettsiales</taxon>
        <taxon>Anaplasmataceae</taxon>
        <taxon>Ehrlichia</taxon>
    </lineage>
</organism>
<comment type="similarity">
    <text evidence="1">Belongs to the UPF0434 family.</text>
</comment>
<comment type="sequence caution" evidence="2">
    <conflict type="erroneous initiation">
        <sequence resource="EMBL-CDS" id="ABD44914"/>
    </conflict>
</comment>
<accession>Q2GHR5</accession>
<reference key="1">
    <citation type="journal article" date="2006" name="PLoS Genet.">
        <title>Comparative genomics of emerging human ehrlichiosis agents.</title>
        <authorList>
            <person name="Dunning Hotopp J.C."/>
            <person name="Lin M."/>
            <person name="Madupu R."/>
            <person name="Crabtree J."/>
            <person name="Angiuoli S.V."/>
            <person name="Eisen J.A."/>
            <person name="Seshadri R."/>
            <person name="Ren Q."/>
            <person name="Wu M."/>
            <person name="Utterback T.R."/>
            <person name="Smith S."/>
            <person name="Lewis M."/>
            <person name="Khouri H."/>
            <person name="Zhang C."/>
            <person name="Niu H."/>
            <person name="Lin Q."/>
            <person name="Ohashi N."/>
            <person name="Zhi N."/>
            <person name="Nelson W.C."/>
            <person name="Brinkac L.M."/>
            <person name="Dodson R.J."/>
            <person name="Rosovitz M.J."/>
            <person name="Sundaram J.P."/>
            <person name="Daugherty S.C."/>
            <person name="Davidsen T."/>
            <person name="Durkin A.S."/>
            <person name="Gwinn M.L."/>
            <person name="Haft D.H."/>
            <person name="Selengut J.D."/>
            <person name="Sullivan S.A."/>
            <person name="Zafar N."/>
            <person name="Zhou L."/>
            <person name="Benahmed F."/>
            <person name="Forberger H."/>
            <person name="Halpin R."/>
            <person name="Mulligan S."/>
            <person name="Robinson J."/>
            <person name="White O."/>
            <person name="Rikihisa Y."/>
            <person name="Tettelin H."/>
        </authorList>
    </citation>
    <scope>NUCLEOTIDE SEQUENCE [LARGE SCALE GENOMIC DNA]</scope>
    <source>
        <strain>ATCC CRL-10679 / Arkansas</strain>
    </source>
</reference>
<protein>
    <recommendedName>
        <fullName evidence="1">UPF0434 protein ECH_0194</fullName>
    </recommendedName>
</protein>
<evidence type="ECO:0000255" key="1">
    <source>
        <dbReference type="HAMAP-Rule" id="MF_01187"/>
    </source>
</evidence>
<evidence type="ECO:0000305" key="2"/>
<keyword id="KW-1185">Reference proteome</keyword>